<evidence type="ECO:0000250" key="1">
    <source>
        <dbReference type="UniProtKB" id="Q5T7B8"/>
    </source>
</evidence>
<evidence type="ECO:0000255" key="2">
    <source>
        <dbReference type="PROSITE-ProRule" id="PRU00184"/>
    </source>
</evidence>
<evidence type="ECO:0000255" key="3">
    <source>
        <dbReference type="PROSITE-ProRule" id="PRU00283"/>
    </source>
</evidence>
<evidence type="ECO:0000256" key="4">
    <source>
        <dbReference type="SAM" id="MobiDB-lite"/>
    </source>
</evidence>
<evidence type="ECO:0000269" key="5">
    <source>
    </source>
</evidence>
<evidence type="ECO:0000303" key="6">
    <source>
    </source>
</evidence>
<evidence type="ECO:0000305" key="7"/>
<evidence type="ECO:0007744" key="8">
    <source>
    </source>
</evidence>
<organism>
    <name type="scientific">Mus musculus</name>
    <name type="common">Mouse</name>
    <dbReference type="NCBI Taxonomy" id="10090"/>
    <lineage>
        <taxon>Eukaryota</taxon>
        <taxon>Metazoa</taxon>
        <taxon>Chordata</taxon>
        <taxon>Craniata</taxon>
        <taxon>Vertebrata</taxon>
        <taxon>Euteleostomi</taxon>
        <taxon>Mammalia</taxon>
        <taxon>Eutheria</taxon>
        <taxon>Euarchontoglires</taxon>
        <taxon>Glires</taxon>
        <taxon>Rodentia</taxon>
        <taxon>Myomorpha</taxon>
        <taxon>Muroidea</taxon>
        <taxon>Muridae</taxon>
        <taxon>Murinae</taxon>
        <taxon>Mus</taxon>
        <taxon>Mus</taxon>
    </lineage>
</organism>
<reference key="1">
    <citation type="journal article" date="2005" name="Science">
        <title>The transcriptional landscape of the mammalian genome.</title>
        <authorList>
            <person name="Carninci P."/>
            <person name="Kasukawa T."/>
            <person name="Katayama S."/>
            <person name="Gough J."/>
            <person name="Frith M.C."/>
            <person name="Maeda N."/>
            <person name="Oyama R."/>
            <person name="Ravasi T."/>
            <person name="Lenhard B."/>
            <person name="Wells C."/>
            <person name="Kodzius R."/>
            <person name="Shimokawa K."/>
            <person name="Bajic V.B."/>
            <person name="Brenner S.E."/>
            <person name="Batalov S."/>
            <person name="Forrest A.R."/>
            <person name="Zavolan M."/>
            <person name="Davis M.J."/>
            <person name="Wilming L.G."/>
            <person name="Aidinis V."/>
            <person name="Allen J.E."/>
            <person name="Ambesi-Impiombato A."/>
            <person name="Apweiler R."/>
            <person name="Aturaliya R.N."/>
            <person name="Bailey T.L."/>
            <person name="Bansal M."/>
            <person name="Baxter L."/>
            <person name="Beisel K.W."/>
            <person name="Bersano T."/>
            <person name="Bono H."/>
            <person name="Chalk A.M."/>
            <person name="Chiu K.P."/>
            <person name="Choudhary V."/>
            <person name="Christoffels A."/>
            <person name="Clutterbuck D.R."/>
            <person name="Crowe M.L."/>
            <person name="Dalla E."/>
            <person name="Dalrymple B.P."/>
            <person name="de Bono B."/>
            <person name="Della Gatta G."/>
            <person name="di Bernardo D."/>
            <person name="Down T."/>
            <person name="Engstrom P."/>
            <person name="Fagiolini M."/>
            <person name="Faulkner G."/>
            <person name="Fletcher C.F."/>
            <person name="Fukushima T."/>
            <person name="Furuno M."/>
            <person name="Futaki S."/>
            <person name="Gariboldi M."/>
            <person name="Georgii-Hemming P."/>
            <person name="Gingeras T.R."/>
            <person name="Gojobori T."/>
            <person name="Green R.E."/>
            <person name="Gustincich S."/>
            <person name="Harbers M."/>
            <person name="Hayashi Y."/>
            <person name="Hensch T.K."/>
            <person name="Hirokawa N."/>
            <person name="Hill D."/>
            <person name="Huminiecki L."/>
            <person name="Iacono M."/>
            <person name="Ikeo K."/>
            <person name="Iwama A."/>
            <person name="Ishikawa T."/>
            <person name="Jakt M."/>
            <person name="Kanapin A."/>
            <person name="Katoh M."/>
            <person name="Kawasawa Y."/>
            <person name="Kelso J."/>
            <person name="Kitamura H."/>
            <person name="Kitano H."/>
            <person name="Kollias G."/>
            <person name="Krishnan S.P."/>
            <person name="Kruger A."/>
            <person name="Kummerfeld S.K."/>
            <person name="Kurochkin I.V."/>
            <person name="Lareau L.F."/>
            <person name="Lazarevic D."/>
            <person name="Lipovich L."/>
            <person name="Liu J."/>
            <person name="Liuni S."/>
            <person name="McWilliam S."/>
            <person name="Madan Babu M."/>
            <person name="Madera M."/>
            <person name="Marchionni L."/>
            <person name="Matsuda H."/>
            <person name="Matsuzawa S."/>
            <person name="Miki H."/>
            <person name="Mignone F."/>
            <person name="Miyake S."/>
            <person name="Morris K."/>
            <person name="Mottagui-Tabar S."/>
            <person name="Mulder N."/>
            <person name="Nakano N."/>
            <person name="Nakauchi H."/>
            <person name="Ng P."/>
            <person name="Nilsson R."/>
            <person name="Nishiguchi S."/>
            <person name="Nishikawa S."/>
            <person name="Nori F."/>
            <person name="Ohara O."/>
            <person name="Okazaki Y."/>
            <person name="Orlando V."/>
            <person name="Pang K.C."/>
            <person name="Pavan W.J."/>
            <person name="Pavesi G."/>
            <person name="Pesole G."/>
            <person name="Petrovsky N."/>
            <person name="Piazza S."/>
            <person name="Reed J."/>
            <person name="Reid J.F."/>
            <person name="Ring B.Z."/>
            <person name="Ringwald M."/>
            <person name="Rost B."/>
            <person name="Ruan Y."/>
            <person name="Salzberg S.L."/>
            <person name="Sandelin A."/>
            <person name="Schneider C."/>
            <person name="Schoenbach C."/>
            <person name="Sekiguchi K."/>
            <person name="Semple C.A."/>
            <person name="Seno S."/>
            <person name="Sessa L."/>
            <person name="Sheng Y."/>
            <person name="Shibata Y."/>
            <person name="Shimada H."/>
            <person name="Shimada K."/>
            <person name="Silva D."/>
            <person name="Sinclair B."/>
            <person name="Sperling S."/>
            <person name="Stupka E."/>
            <person name="Sugiura K."/>
            <person name="Sultana R."/>
            <person name="Takenaka Y."/>
            <person name="Taki K."/>
            <person name="Tammoja K."/>
            <person name="Tan S.L."/>
            <person name="Tang S."/>
            <person name="Taylor M.S."/>
            <person name="Tegner J."/>
            <person name="Teichmann S.A."/>
            <person name="Ueda H.R."/>
            <person name="van Nimwegen E."/>
            <person name="Verardo R."/>
            <person name="Wei C.L."/>
            <person name="Yagi K."/>
            <person name="Yamanishi H."/>
            <person name="Zabarovsky E."/>
            <person name="Zhu S."/>
            <person name="Zimmer A."/>
            <person name="Hide W."/>
            <person name="Bult C."/>
            <person name="Grimmond S.M."/>
            <person name="Teasdale R.D."/>
            <person name="Liu E.T."/>
            <person name="Brusic V."/>
            <person name="Quackenbush J."/>
            <person name="Wahlestedt C."/>
            <person name="Mattick J.S."/>
            <person name="Hume D.A."/>
            <person name="Kai C."/>
            <person name="Sasaki D."/>
            <person name="Tomaru Y."/>
            <person name="Fukuda S."/>
            <person name="Kanamori-Katayama M."/>
            <person name="Suzuki M."/>
            <person name="Aoki J."/>
            <person name="Arakawa T."/>
            <person name="Iida J."/>
            <person name="Imamura K."/>
            <person name="Itoh M."/>
            <person name="Kato T."/>
            <person name="Kawaji H."/>
            <person name="Kawagashira N."/>
            <person name="Kawashima T."/>
            <person name="Kojima M."/>
            <person name="Kondo S."/>
            <person name="Konno H."/>
            <person name="Nakano K."/>
            <person name="Ninomiya N."/>
            <person name="Nishio T."/>
            <person name="Okada M."/>
            <person name="Plessy C."/>
            <person name="Shibata K."/>
            <person name="Shiraki T."/>
            <person name="Suzuki S."/>
            <person name="Tagami M."/>
            <person name="Waki K."/>
            <person name="Watahiki A."/>
            <person name="Okamura-Oho Y."/>
            <person name="Suzuki H."/>
            <person name="Kawai J."/>
            <person name="Hayashizaki Y."/>
        </authorList>
    </citation>
    <scope>NUCLEOTIDE SEQUENCE [LARGE SCALE MRNA] (ISOFORM 2)</scope>
    <source>
        <strain>C57BL/6J</strain>
        <tissue>Lung</tissue>
    </source>
</reference>
<reference key="2">
    <citation type="journal article" date="2009" name="PLoS Biol.">
        <title>Lineage-specific biology revealed by a finished genome assembly of the mouse.</title>
        <authorList>
            <person name="Church D.M."/>
            <person name="Goodstadt L."/>
            <person name="Hillier L.W."/>
            <person name="Zody M.C."/>
            <person name="Goldstein S."/>
            <person name="She X."/>
            <person name="Bult C.J."/>
            <person name="Agarwala R."/>
            <person name="Cherry J.L."/>
            <person name="DiCuccio M."/>
            <person name="Hlavina W."/>
            <person name="Kapustin Y."/>
            <person name="Meric P."/>
            <person name="Maglott D."/>
            <person name="Birtle Z."/>
            <person name="Marques A.C."/>
            <person name="Graves T."/>
            <person name="Zhou S."/>
            <person name="Teague B."/>
            <person name="Potamousis K."/>
            <person name="Churas C."/>
            <person name="Place M."/>
            <person name="Herschleb J."/>
            <person name="Runnheim R."/>
            <person name="Forrest D."/>
            <person name="Amos-Landgraf J."/>
            <person name="Schwartz D.C."/>
            <person name="Cheng Z."/>
            <person name="Lindblad-Toh K."/>
            <person name="Eichler E.E."/>
            <person name="Ponting C.P."/>
        </authorList>
    </citation>
    <scope>NUCLEOTIDE SEQUENCE [LARGE SCALE GENOMIC DNA]</scope>
    <source>
        <strain>C57BL/6J</strain>
    </source>
</reference>
<reference key="3">
    <citation type="journal article" date="2004" name="Genome Res.">
        <title>The status, quality, and expansion of the NIH full-length cDNA project: the Mammalian Gene Collection (MGC).</title>
        <authorList>
            <consortium name="The MGC Project Team"/>
        </authorList>
    </citation>
    <scope>NUCLEOTIDE SEQUENCE [LARGE SCALE MRNA] (ISOFORM 1)</scope>
    <source>
        <strain>C57BL/6J</strain>
        <tissue>Embryonic germ cell</tissue>
    </source>
</reference>
<reference key="4">
    <citation type="journal article" date="2001" name="Proc. Natl. Acad. Sci. U.S.A.">
        <title>All kinesin superfamily protein, KIF, genes in mouse and human.</title>
        <authorList>
            <person name="Miki H."/>
            <person name="Setou M."/>
            <person name="Kaneshiro K."/>
        </authorList>
    </citation>
    <scope>NUCLEOTIDE SEQUENCE [GENOMIC DNA] OF 313-450</scope>
    <scope>TISSUE SPECIFICITY</scope>
</reference>
<reference key="5">
    <citation type="journal article" date="2010" name="Cell">
        <title>A tissue-specific atlas of mouse protein phosphorylation and expression.</title>
        <authorList>
            <person name="Huttlin E.L."/>
            <person name="Jedrychowski M.P."/>
            <person name="Elias J.E."/>
            <person name="Goswami T."/>
            <person name="Rad R."/>
            <person name="Beausoleil S.A."/>
            <person name="Villen J."/>
            <person name="Haas W."/>
            <person name="Sowa M.E."/>
            <person name="Gygi S.P."/>
        </authorList>
    </citation>
    <scope>PHOSPHORYLATION [LARGE SCALE ANALYSIS] AT SER-579; SER-640; SER-817 AND SER-820</scope>
    <scope>IDENTIFICATION BY MASS SPECTROMETRY [LARGE SCALE ANALYSIS]</scope>
    <source>
        <tissue>Spleen</tissue>
        <tissue>Testis</tissue>
    </source>
</reference>
<accession>Q6NWW5</accession>
<accession>A2BGK6</accession>
<accession>Q8BUI2</accession>
<accession>Q99PT7</accession>
<feature type="chain" id="PRO_0000278249" description="Kinesin-like protein KIF24">
    <location>
        <begin position="1"/>
        <end position="1356"/>
    </location>
</feature>
<feature type="domain" description="SAM" evidence="2">
    <location>
        <begin position="1"/>
        <end position="64"/>
    </location>
</feature>
<feature type="domain" description="Kinesin motor" evidence="3">
    <location>
        <begin position="218"/>
        <end position="541"/>
    </location>
</feature>
<feature type="region of interest" description="Disordered" evidence="4">
    <location>
        <begin position="93"/>
        <end position="119"/>
    </location>
</feature>
<feature type="region of interest" description="Interaction with MPHOSPH9" evidence="1">
    <location>
        <begin position="473"/>
        <end position="702"/>
    </location>
</feature>
<feature type="region of interest" description="Disordered" evidence="4">
    <location>
        <begin position="552"/>
        <end position="581"/>
    </location>
</feature>
<feature type="region of interest" description="Disordered" evidence="4">
    <location>
        <begin position="597"/>
        <end position="664"/>
    </location>
</feature>
<feature type="region of interest" description="Disordered" evidence="4">
    <location>
        <begin position="788"/>
        <end position="840"/>
    </location>
</feature>
<feature type="region of interest" description="Disordered" evidence="4">
    <location>
        <begin position="897"/>
        <end position="947"/>
    </location>
</feature>
<feature type="region of interest" description="Disordered" evidence="4">
    <location>
        <begin position="964"/>
        <end position="998"/>
    </location>
</feature>
<feature type="region of interest" description="Disordered" evidence="4">
    <location>
        <begin position="1109"/>
        <end position="1140"/>
    </location>
</feature>
<feature type="compositionally biased region" description="Polar residues" evidence="4">
    <location>
        <begin position="552"/>
        <end position="571"/>
    </location>
</feature>
<feature type="compositionally biased region" description="Basic residues" evidence="4">
    <location>
        <begin position="640"/>
        <end position="653"/>
    </location>
</feature>
<feature type="compositionally biased region" description="Acidic residues" evidence="4">
    <location>
        <begin position="810"/>
        <end position="821"/>
    </location>
</feature>
<feature type="compositionally biased region" description="Polar residues" evidence="4">
    <location>
        <begin position="830"/>
        <end position="840"/>
    </location>
</feature>
<feature type="compositionally biased region" description="Polar residues" evidence="4">
    <location>
        <begin position="970"/>
        <end position="979"/>
    </location>
</feature>
<feature type="binding site" evidence="3">
    <location>
        <begin position="308"/>
        <end position="315"/>
    </location>
    <ligand>
        <name>ATP</name>
        <dbReference type="ChEBI" id="CHEBI:30616"/>
    </ligand>
</feature>
<feature type="modified residue" description="Phosphoserine" evidence="1">
    <location>
        <position position="102"/>
    </location>
</feature>
<feature type="modified residue" description="Phosphoserine" evidence="1">
    <location>
        <position position="473"/>
    </location>
</feature>
<feature type="modified residue" description="Phosphoserine" evidence="8">
    <location>
        <position position="579"/>
    </location>
</feature>
<feature type="modified residue" description="Phosphothreonine; by NEK2" evidence="1">
    <location>
        <position position="615"/>
    </location>
</feature>
<feature type="modified residue" description="Phosphoserine; by NEK2" evidence="1">
    <location>
        <position position="616"/>
    </location>
</feature>
<feature type="modified residue" description="Phosphoserine" evidence="8">
    <location>
        <position position="640"/>
    </location>
</feature>
<feature type="modified residue" description="Phosphoserine" evidence="8">
    <location>
        <position position="817"/>
    </location>
</feature>
<feature type="modified residue" description="Phosphoserine" evidence="8">
    <location>
        <position position="820"/>
    </location>
</feature>
<feature type="modified residue" description="Phosphoserine" evidence="1">
    <location>
        <position position="1008"/>
    </location>
</feature>
<feature type="splice variant" id="VSP_023214" description="In isoform 2." evidence="6">
    <location>
        <begin position="265"/>
        <end position="398"/>
    </location>
</feature>
<feature type="sequence conflict" description="In Ref. 1; BAC39323." evidence="7" ref="1">
    <original>A</original>
    <variation>T</variation>
    <location>
        <position position="413"/>
    </location>
</feature>
<dbReference type="EMBL" id="AK084967">
    <property type="protein sequence ID" value="BAC39323.1"/>
    <property type="status" value="ALT_SEQ"/>
    <property type="molecule type" value="mRNA"/>
</dbReference>
<dbReference type="EMBL" id="AL807823">
    <property type="status" value="NOT_ANNOTATED_CDS"/>
    <property type="molecule type" value="Genomic_DNA"/>
</dbReference>
<dbReference type="EMBL" id="BX470237">
    <property type="status" value="NOT_ANNOTATED_CDS"/>
    <property type="molecule type" value="Genomic_DNA"/>
</dbReference>
<dbReference type="EMBL" id="BC067395">
    <property type="protein sequence ID" value="AAH67395.1"/>
    <property type="status" value="ALT_INIT"/>
    <property type="molecule type" value="mRNA"/>
</dbReference>
<dbReference type="EMBL" id="AB054028">
    <property type="protein sequence ID" value="BAB32492.1"/>
    <property type="molecule type" value="Genomic_DNA"/>
</dbReference>
<dbReference type="CCDS" id="CCDS18060.2">
    <molecule id="Q6NWW5-1"/>
</dbReference>
<dbReference type="RefSeq" id="NP_077203.2">
    <molecule id="Q6NWW5-1"/>
    <property type="nucleotide sequence ID" value="NM_024241.3"/>
</dbReference>
<dbReference type="RefSeq" id="XP_006537612.1">
    <molecule id="Q6NWW5-1"/>
    <property type="nucleotide sequence ID" value="XM_006537549.5"/>
</dbReference>
<dbReference type="RefSeq" id="XP_011248205.1">
    <property type="nucleotide sequence ID" value="XM_011249903.2"/>
</dbReference>
<dbReference type="RefSeq" id="XP_030108937.1">
    <molecule id="Q6NWW5-1"/>
    <property type="nucleotide sequence ID" value="XM_030253077.2"/>
</dbReference>
<dbReference type="RefSeq" id="XP_030108938.1">
    <molecule id="Q6NWW5-1"/>
    <property type="nucleotide sequence ID" value="XM_030253078.2"/>
</dbReference>
<dbReference type="SMR" id="Q6NWW5"/>
<dbReference type="BioGRID" id="224613">
    <property type="interactions" value="1"/>
</dbReference>
<dbReference type="FunCoup" id="Q6NWW5">
    <property type="interactions" value="120"/>
</dbReference>
<dbReference type="STRING" id="10090.ENSMUSP00000103690"/>
<dbReference type="GlyGen" id="Q6NWW5">
    <property type="glycosylation" value="1 site"/>
</dbReference>
<dbReference type="iPTMnet" id="Q6NWW5"/>
<dbReference type="PhosphoSitePlus" id="Q6NWW5"/>
<dbReference type="PaxDb" id="10090-ENSMUSP00000103690"/>
<dbReference type="PeptideAtlas" id="Q6NWW5"/>
<dbReference type="ProteomicsDB" id="263531">
    <molecule id="Q6NWW5-1"/>
</dbReference>
<dbReference type="ProteomicsDB" id="263532">
    <molecule id="Q6NWW5-2"/>
</dbReference>
<dbReference type="Antibodypedia" id="11186">
    <property type="antibodies" value="104 antibodies from 18 providers"/>
</dbReference>
<dbReference type="Ensembl" id="ENSMUST00000030148.6">
    <molecule id="Q6NWW5-2"/>
    <property type="protein sequence ID" value="ENSMUSP00000030148.6"/>
    <property type="gene ID" value="ENSMUSG00000028438.17"/>
</dbReference>
<dbReference type="Ensembl" id="ENSMUST00000108055.9">
    <molecule id="Q6NWW5-1"/>
    <property type="protein sequence ID" value="ENSMUSP00000103690.3"/>
    <property type="gene ID" value="ENSMUSG00000028438.17"/>
</dbReference>
<dbReference type="GeneID" id="109242"/>
<dbReference type="KEGG" id="mmu:109242"/>
<dbReference type="UCSC" id="uc008sio.1">
    <molecule id="Q6NWW5-1"/>
    <property type="organism name" value="mouse"/>
</dbReference>
<dbReference type="UCSC" id="uc012dcb.1">
    <molecule id="Q6NWW5-2"/>
    <property type="organism name" value="mouse"/>
</dbReference>
<dbReference type="AGR" id="MGI:1918345"/>
<dbReference type="CTD" id="347240"/>
<dbReference type="MGI" id="MGI:1918345">
    <property type="gene designation" value="Kif24"/>
</dbReference>
<dbReference type="VEuPathDB" id="HostDB:ENSMUSG00000028438"/>
<dbReference type="eggNOG" id="KOG0246">
    <property type="taxonomic scope" value="Eukaryota"/>
</dbReference>
<dbReference type="GeneTree" id="ENSGT00940000154046"/>
<dbReference type="HOGENOM" id="CLU_007560_0_0_1"/>
<dbReference type="InParanoid" id="Q6NWW5"/>
<dbReference type="OMA" id="WGNTFAK"/>
<dbReference type="OrthoDB" id="3176171at2759"/>
<dbReference type="PhylomeDB" id="Q6NWW5"/>
<dbReference type="TreeFam" id="TF336001"/>
<dbReference type="Reactome" id="R-MMU-5620912">
    <property type="pathway name" value="Anchoring of the basal body to the plasma membrane"/>
</dbReference>
<dbReference type="BioGRID-ORCS" id="109242">
    <property type="hits" value="4 hits in 78 CRISPR screens"/>
</dbReference>
<dbReference type="ChiTaRS" id="Kif24">
    <property type="organism name" value="mouse"/>
</dbReference>
<dbReference type="PRO" id="PR:Q6NWW5"/>
<dbReference type="Proteomes" id="UP000000589">
    <property type="component" value="Chromosome 4"/>
</dbReference>
<dbReference type="RNAct" id="Q6NWW5">
    <property type="molecule type" value="protein"/>
</dbReference>
<dbReference type="Bgee" id="ENSMUSG00000028438">
    <property type="expression patterns" value="Expressed in blastoderm cell in morula and 149 other cell types or tissues"/>
</dbReference>
<dbReference type="ExpressionAtlas" id="Q6NWW5">
    <property type="expression patterns" value="baseline and differential"/>
</dbReference>
<dbReference type="GO" id="GO:0005814">
    <property type="term" value="C:centriole"/>
    <property type="evidence" value="ECO:0000250"/>
    <property type="project" value="UniProtKB"/>
</dbReference>
<dbReference type="GO" id="GO:0005813">
    <property type="term" value="C:centrosome"/>
    <property type="evidence" value="ECO:0000250"/>
    <property type="project" value="UniProtKB"/>
</dbReference>
<dbReference type="GO" id="GO:0005737">
    <property type="term" value="C:cytoplasm"/>
    <property type="evidence" value="ECO:0007669"/>
    <property type="project" value="UniProtKB-KW"/>
</dbReference>
<dbReference type="GO" id="GO:0005874">
    <property type="term" value="C:microtubule"/>
    <property type="evidence" value="ECO:0007669"/>
    <property type="project" value="UniProtKB-KW"/>
</dbReference>
<dbReference type="GO" id="GO:0032991">
    <property type="term" value="C:protein-containing complex"/>
    <property type="evidence" value="ECO:0000266"/>
    <property type="project" value="MGI"/>
</dbReference>
<dbReference type="GO" id="GO:0005524">
    <property type="term" value="F:ATP binding"/>
    <property type="evidence" value="ECO:0007669"/>
    <property type="project" value="UniProtKB-KW"/>
</dbReference>
<dbReference type="GO" id="GO:0042802">
    <property type="term" value="F:identical protein binding"/>
    <property type="evidence" value="ECO:0007669"/>
    <property type="project" value="Ensembl"/>
</dbReference>
<dbReference type="GO" id="GO:0008017">
    <property type="term" value="F:microtubule binding"/>
    <property type="evidence" value="ECO:0007669"/>
    <property type="project" value="InterPro"/>
</dbReference>
<dbReference type="GO" id="GO:0003777">
    <property type="term" value="F:microtubule motor activity"/>
    <property type="evidence" value="ECO:0000250"/>
    <property type="project" value="UniProtKB"/>
</dbReference>
<dbReference type="GO" id="GO:0060271">
    <property type="term" value="P:cilium assembly"/>
    <property type="evidence" value="ECO:0000250"/>
    <property type="project" value="UniProtKB"/>
</dbReference>
<dbReference type="GO" id="GO:0007019">
    <property type="term" value="P:microtubule depolymerization"/>
    <property type="evidence" value="ECO:0000250"/>
    <property type="project" value="UniProtKB"/>
</dbReference>
<dbReference type="GO" id="GO:0007018">
    <property type="term" value="P:microtubule-based movement"/>
    <property type="evidence" value="ECO:0007669"/>
    <property type="project" value="InterPro"/>
</dbReference>
<dbReference type="GO" id="GO:1902018">
    <property type="term" value="P:negative regulation of cilium assembly"/>
    <property type="evidence" value="ECO:0000250"/>
    <property type="project" value="UniProtKB"/>
</dbReference>
<dbReference type="CDD" id="cd01367">
    <property type="entry name" value="KISc_KIF2_like"/>
    <property type="match status" value="1"/>
</dbReference>
<dbReference type="CDD" id="cd09541">
    <property type="entry name" value="SAM_KIF24-like"/>
    <property type="match status" value="1"/>
</dbReference>
<dbReference type="FunFam" id="1.10.150.50:FF:000052">
    <property type="entry name" value="Kinesin family member 24"/>
    <property type="match status" value="1"/>
</dbReference>
<dbReference type="FunFam" id="3.40.850.10:FF:000012">
    <property type="entry name" value="Kinesin-like protein"/>
    <property type="match status" value="1"/>
</dbReference>
<dbReference type="Gene3D" id="3.40.850.10">
    <property type="entry name" value="Kinesin motor domain"/>
    <property type="match status" value="1"/>
</dbReference>
<dbReference type="Gene3D" id="1.10.150.50">
    <property type="entry name" value="Transcription Factor, Ets-1"/>
    <property type="match status" value="1"/>
</dbReference>
<dbReference type="InterPro" id="IPR027640">
    <property type="entry name" value="Kinesin-like_fam"/>
</dbReference>
<dbReference type="InterPro" id="IPR019821">
    <property type="entry name" value="Kinesin_motor_CS"/>
</dbReference>
<dbReference type="InterPro" id="IPR001752">
    <property type="entry name" value="Kinesin_motor_dom"/>
</dbReference>
<dbReference type="InterPro" id="IPR036961">
    <property type="entry name" value="Kinesin_motor_dom_sf"/>
</dbReference>
<dbReference type="InterPro" id="IPR027417">
    <property type="entry name" value="P-loop_NTPase"/>
</dbReference>
<dbReference type="InterPro" id="IPR001660">
    <property type="entry name" value="SAM"/>
</dbReference>
<dbReference type="InterPro" id="IPR013761">
    <property type="entry name" value="SAM/pointed_sf"/>
</dbReference>
<dbReference type="PANTHER" id="PTHR47971:SF20">
    <property type="entry name" value="KINESIN-LIKE PROTEIN KIF24"/>
    <property type="match status" value="1"/>
</dbReference>
<dbReference type="PANTHER" id="PTHR47971">
    <property type="entry name" value="KINESIN-RELATED PROTEIN 6"/>
    <property type="match status" value="1"/>
</dbReference>
<dbReference type="Pfam" id="PF00225">
    <property type="entry name" value="Kinesin"/>
    <property type="match status" value="1"/>
</dbReference>
<dbReference type="Pfam" id="PF00536">
    <property type="entry name" value="SAM_1"/>
    <property type="match status" value="1"/>
</dbReference>
<dbReference type="PRINTS" id="PR00380">
    <property type="entry name" value="KINESINHEAVY"/>
</dbReference>
<dbReference type="SMART" id="SM00129">
    <property type="entry name" value="KISc"/>
    <property type="match status" value="1"/>
</dbReference>
<dbReference type="SUPFAM" id="SSF52540">
    <property type="entry name" value="P-loop containing nucleoside triphosphate hydrolases"/>
    <property type="match status" value="1"/>
</dbReference>
<dbReference type="SUPFAM" id="SSF47769">
    <property type="entry name" value="SAM/Pointed domain"/>
    <property type="match status" value="1"/>
</dbReference>
<dbReference type="PROSITE" id="PS00411">
    <property type="entry name" value="KINESIN_MOTOR_1"/>
    <property type="match status" value="1"/>
</dbReference>
<dbReference type="PROSITE" id="PS50067">
    <property type="entry name" value="KINESIN_MOTOR_2"/>
    <property type="match status" value="1"/>
</dbReference>
<dbReference type="PROSITE" id="PS50105">
    <property type="entry name" value="SAM_DOMAIN"/>
    <property type="match status" value="1"/>
</dbReference>
<comment type="function">
    <text evidence="1">Microtubule-dependent motor protein that acts as a negative regulator of ciliogenesis by mediating recruitment of CCP110 to mother centriole in cycling cells, leading to restrict nucleation of cilia at centrioles. Mediates depolymerization of microtubules of centriolar origin, possibly to suppress aberrant cilia formation. Following activation by NEK2 involved in disassembly of primary cilium during G2/M phase but does not disassemble fully formed ciliary axonemes. As cilium assembly and disassembly is proposed to coexist in a dynamic equilibrium may suppress nascent cilium assembly and, potentially, ciliar re-assembly in cells that have already disassembled their cilia ensuring the completion of cilium removal in the later stages of the cell cycle (By similarity). Plays an important role in recruiting MPHOSPH9, a negative regulator of cilia formation to the distal end of mother centriole (By similarity).</text>
</comment>
<comment type="subunit">
    <text evidence="1">Interacts with CCP110, CEP97, TALPID3 (By similarity). Interacts with MPHOSPH9 (By similarity).</text>
</comment>
<comment type="subcellular location">
    <subcellularLocation>
        <location evidence="1">Cytoplasm</location>
        <location evidence="1">Cytoskeleton</location>
        <location evidence="1">Microtubule organizing center</location>
        <location evidence="1">Centrosome</location>
        <location evidence="1">Centriole</location>
    </subcellularLocation>
    <subcellularLocation>
        <location evidence="1">Cytoplasm</location>
        <location evidence="1">Cytoskeleton</location>
        <location evidence="1">Microtubule organizing center</location>
        <location evidence="1">Centrosome</location>
    </subcellularLocation>
    <text evidence="1">Primarily localizes to the mother centriole/basal body and is either absent at daughter centriole.</text>
</comment>
<comment type="alternative products">
    <event type="alternative splicing"/>
    <isoform>
        <id>Q6NWW5-1</id>
        <name>1</name>
        <sequence type="displayed"/>
    </isoform>
    <isoform>
        <id>Q6NWW5-2</id>
        <name>2</name>
        <sequence type="described" ref="VSP_023214"/>
    </isoform>
</comment>
<comment type="tissue specificity">
    <text evidence="5">Expressed in brain, spinal cord, and small intestine.</text>
</comment>
<comment type="similarity">
    <text evidence="3">Belongs to the TRAFAC class myosin-kinesin ATPase superfamily. Kinesin family.</text>
</comment>
<comment type="sequence caution" evidence="7">
    <conflict type="erroneous initiation">
        <sequence resource="EMBL-CDS" id="AAH67395"/>
    </conflict>
    <text>Truncated N-terminus.</text>
</comment>
<comment type="sequence caution" evidence="7">
    <conflict type="erroneous termination">
        <sequence resource="EMBL-CDS" id="BAC39323"/>
    </conflict>
    <text>Truncated C-terminus.</text>
</comment>
<keyword id="KW-0025">Alternative splicing</keyword>
<keyword id="KW-0067">ATP-binding</keyword>
<keyword id="KW-0970">Cilium biogenesis/degradation</keyword>
<keyword id="KW-0963">Cytoplasm</keyword>
<keyword id="KW-0206">Cytoskeleton</keyword>
<keyword id="KW-0493">Microtubule</keyword>
<keyword id="KW-0505">Motor protein</keyword>
<keyword id="KW-0547">Nucleotide-binding</keyword>
<keyword id="KW-0597">Phosphoprotein</keyword>
<keyword id="KW-1185">Reference proteome</keyword>
<name>KIF24_MOUSE</name>
<protein>
    <recommendedName>
        <fullName>Kinesin-like protein KIF24</fullName>
    </recommendedName>
</protein>
<proteinExistence type="evidence at protein level"/>
<sequence>MASWLYECLCEAELAQYYPHFTALGLQKIDELAKVTMKDYSRLGVHDMNDRKRLFQLIKIIKIMQEEDKALGIPEHPLQASSLYTKPREFRSGPRRQLHFDSPSASKDKMANNETGSLSNFSVDEQKSTYLKVLEHMLPDDSQCQTKIRAPDASAADASMQTETNAPLFSSNYFSPQLGNCDIPVIQRVSHVSGYNYGIPHSCVRQITSENPWTEMEKIRVCVRKRPLGVREVRRGEVNVITVEDKETLLVHEKKEAVDLTQYILQHVFYFDEVFGEACSNQDVYLKTAHPLIQHIFNGGSATCFAYGQTGAGKTYTMIGTHQNPGLYALAAKDIFRQLKVSQSRRNLFVWISFYEIYCGQLYDLLNRRKRLFAREDSKHVVQIAGLRELQVDSVELLLQVILKGSKERSTGATGVNADSSRSHAIIQIQIKDSAKRTFGRISFIDLAGSERAADARDSDRQTKMEGAEINQSLLALKECIRALDQEHTHTPFRQSKLTQVLKDSFIGNAKTCMIANISPSHIATEHTLNTLRYADRVKELKKGVKCCASATSQNQTSANASPKRIQSSPVTLPGDKCSPKKVKLGLQQSLTVAPGPTKVKAHPLASHVPNVPFTSGPKTPGKKSSSRGSPTPEWDMKASPRKGTTRSGHSIKKGAESAPLCSEKSQIGSKIAVGWEGRASDPGEGLLRVRLPTRGKKVQPVQPVQKQLLSRPRLLANSHHLEATQDSKVGTPAGLAPEAWTNPILQQKEREEHLRFYHQQFQQPPLLKQKLNYQPLQRLLCQHRPSEGRLQSETGFPLHSNPENRDGAQAEDLDDSDFSEDSFSHGSSQPAMKQGSTALERSGSSFFLHQDREHSPEEQAAERQQCLLFSSETDGSKKRPADSWVYSRDPIISHRRGALSQSHSPSMVCPDWSKEEDSASSGPSPKDNRAQKPSSSQVDFVHHQKPGEAQVSDIRLEAFTSEVPEQAEGSLSSPSPENGLSFPLSHVAVSGSPDQRDRVCTPLREVSENRVTHTPGRVNSSTPFQEDSGEQIQMCSANASGLMAPLTMSLLETPCHEDLSSLEQIAQDGAGYGFMAEIVGGPAAGHTVPSYDQEAALPVSSATECLWLSSSPPDNRPSGDLPALSPSPIHQHSPDKLPGREAYQTRRPILLPENHMGSKLYDDRAEETELGGSLTFPRKPSSNIHAGVPYSTPFLTSCTGSSNGVGRPWAQERKHPTGVSCQELVSSTDSNKPHYNEDIAWLRHRPISRCLDSDSPVVPSCSSKALRTYCPLTPEQAQQVIIRAHKEQLDEMAELDLKEETLMTQMDSNDFEDFVTQLDEIMALKSRCIQSLRSQLQLYLTSHRPAAAPERTVVS</sequence>
<gene>
    <name type="primary">Kif24</name>
</gene>